<accession>Q03497</accession>
<accession>D3DKQ8</accession>
<reference key="1">
    <citation type="journal article" date="1992" name="EMBO J.">
        <title>The protein kinase homologue Ste20p is required to link the yeast pheromone response G-protein beta gamma subunits to downstream signalling components.</title>
        <authorList>
            <person name="Leberer E."/>
            <person name="Dignard D."/>
            <person name="Harcus D."/>
            <person name="Thomas D.Y."/>
            <person name="Whiteway M."/>
        </authorList>
    </citation>
    <scope>NUCLEOTIDE SEQUENCE [GENOMIC DNA]</scope>
    <scope>FUNCTION</scope>
</reference>
<reference key="2">
    <citation type="journal article" date="1993" name="Proc. Natl. Acad. Sci. U.S.A.">
        <title>A dominant truncation allele identifies a gene, STE20, that encodes a putative protein kinase necessary for mating in Saccharomyces cerevisiae.</title>
        <authorList>
            <person name="Ramer S.W."/>
            <person name="Davis R.W."/>
        </authorList>
    </citation>
    <scope>NUCLEOTIDE SEQUENCE [GENOMIC DNA]</scope>
    <scope>FUNCTION</scope>
</reference>
<reference key="3">
    <citation type="journal article" date="1994" name="Science">
        <title>Complete nucleotide sequence of Saccharomyces cerevisiae chromosome VIII.</title>
        <authorList>
            <person name="Johnston M."/>
            <person name="Andrews S."/>
            <person name="Brinkman R."/>
            <person name="Cooper J."/>
            <person name="Ding H."/>
            <person name="Dover J."/>
            <person name="Du Z."/>
            <person name="Favello A."/>
            <person name="Fulton L."/>
            <person name="Gattung S."/>
            <person name="Geisel C."/>
            <person name="Kirsten J."/>
            <person name="Kucaba T."/>
            <person name="Hillier L.W."/>
            <person name="Jier M."/>
            <person name="Johnston L."/>
            <person name="Langston Y."/>
            <person name="Latreille P."/>
            <person name="Louis E.J."/>
            <person name="Macri C."/>
            <person name="Mardis E."/>
            <person name="Menezes S."/>
            <person name="Mouser L."/>
            <person name="Nhan M."/>
            <person name="Rifkin L."/>
            <person name="Riles L."/>
            <person name="St Peter H."/>
            <person name="Trevaskis E."/>
            <person name="Vaughan K."/>
            <person name="Vignati D."/>
            <person name="Wilcox L."/>
            <person name="Wohldman P."/>
            <person name="Waterston R."/>
            <person name="Wilson R."/>
            <person name="Vaudin M."/>
        </authorList>
    </citation>
    <scope>NUCLEOTIDE SEQUENCE [LARGE SCALE GENOMIC DNA]</scope>
    <source>
        <strain>ATCC 204508 / S288c</strain>
    </source>
</reference>
<reference key="4">
    <citation type="journal article" date="2014" name="G3 (Bethesda)">
        <title>The reference genome sequence of Saccharomyces cerevisiae: Then and now.</title>
        <authorList>
            <person name="Engel S.R."/>
            <person name="Dietrich F.S."/>
            <person name="Fisk D.G."/>
            <person name="Binkley G."/>
            <person name="Balakrishnan R."/>
            <person name="Costanzo M.C."/>
            <person name="Dwight S.S."/>
            <person name="Hitz B.C."/>
            <person name="Karra K."/>
            <person name="Nash R.S."/>
            <person name="Weng S."/>
            <person name="Wong E.D."/>
            <person name="Lloyd P."/>
            <person name="Skrzypek M.S."/>
            <person name="Miyasato S.R."/>
            <person name="Simison M."/>
            <person name="Cherry J.M."/>
        </authorList>
    </citation>
    <scope>GENOME REANNOTATION</scope>
    <source>
        <strain>ATCC 204508 / S288c</strain>
    </source>
</reference>
<reference key="5">
    <citation type="journal article" date="2006" name="Mol. Cell. Biol.">
        <title>The RA domain of Ste50 adaptor protein is required for delivery of Ste11 to the plasma membrane in the filamentous growth signaling pathway of the yeast Saccharomyces cerevisiae.</title>
        <authorList>
            <person name="Truckses D.M."/>
            <person name="Bloomekatz J.E."/>
            <person name="Thorner J."/>
        </authorList>
    </citation>
    <scope>PROTEIN SEQUENCE OF 164-169; 583-591 AND 408-431</scope>
    <scope>PHOSPHORYLATION AT SER-169; SER-585 AND SER-418</scope>
</reference>
<reference key="6">
    <citation type="journal article" date="1995" name="J. Biol. Chem.">
        <title>Molecular characterization of Ste20p, a potential mitogen-activated protein or extracellular signal-regulated kinase kinase (MEK) kinase kinase from Saccharomyces cerevisiae.</title>
        <authorList>
            <person name="Wu C."/>
            <person name="Whiteway M."/>
            <person name="Thomas D.Y."/>
            <person name="Leberer E."/>
        </authorList>
    </citation>
    <scope>AUTOPHOSPHORYLATION</scope>
    <scope>FUNCTION IN PHOSPHORYLATION OF STE11</scope>
    <scope>MUTAGENESIS OF LYS-649 AND THR-777</scope>
</reference>
<reference key="7">
    <citation type="journal article" date="1996" name="EMBO J.">
        <title>Functional analysis of the interaction between the small GTP binding protein Cdc42 and the Ste20 protein kinase in yeast.</title>
        <authorList>
            <person name="Peter M."/>
            <person name="Neiman A.M."/>
            <person name="Park H.-O."/>
            <person name="van Lohuizen M."/>
            <person name="Herskowitz I."/>
        </authorList>
    </citation>
    <scope>FUNCTION</scope>
    <scope>INTERACTION WITH CDC42</scope>
    <scope>SUBCELLULAR LOCATION</scope>
</reference>
<reference key="8">
    <citation type="journal article" date="1996" name="Genetics">
        <title>Genetic relationships between the G protein beta gamma complex, Ste5p, Ste20p and Cdc42p: investigation of effector roles in the yeast pheromone response pathway.</title>
        <authorList>
            <person name="Akada R."/>
            <person name="Kallal L."/>
            <person name="Johnson D.I."/>
            <person name="Kurjan J."/>
        </authorList>
    </citation>
    <scope>FUNCTION</scope>
</reference>
<reference key="9">
    <citation type="journal article" date="1996" name="Proc. Natl. Acad. Sci. U.S.A.">
        <title>Ras2 signals via the Cdc42/Ste20/mitogen-activated protein kinase module to induce filamentous growth in Saccharomyces cerevisiae.</title>
        <authorList>
            <person name="Moesch H.-U."/>
            <person name="Roberts R.L."/>
            <person name="Fink G.R."/>
        </authorList>
    </citation>
    <scope>FUNCTION</scope>
</reference>
<reference key="10">
    <citation type="journal article" date="1997" name="Cell">
        <title>14-3-3 proteins are essential for RAS/MAPK cascade signaling during pseudohyphal development in S. cerevisiae.</title>
        <authorList>
            <person name="Roberts R.L."/>
            <person name="Moesch H.-U."/>
            <person name="Fink G.R."/>
        </authorList>
    </citation>
    <scope>INTERACTION WITH BMH1 AND BMH2</scope>
</reference>
<reference key="11">
    <citation type="journal article" date="1997" name="EMBO J.">
        <title>Functional characterization of the Cdc42p binding domain of yeast Ste20p protein kinase.</title>
        <authorList>
            <person name="Leberer E."/>
            <person name="Wu C."/>
            <person name="Leeuw T."/>
            <person name="Fourest-Lieuvin A."/>
            <person name="Segall J.E."/>
            <person name="Thomas D.Y."/>
        </authorList>
    </citation>
    <scope>FUNCTION</scope>
    <scope>INTERACTION WITH CDC42</scope>
    <scope>SUBCELLULAR LOCATION</scope>
</reference>
<reference key="12">
    <citation type="journal article" date="1997" name="J. Biol. Chem.">
        <title>The phosphorylation site for Ste20p-like protein kinases is essential for the function of myosin-I in yeast.</title>
        <authorList>
            <person name="Wu C."/>
            <person name="Lytvyn V."/>
            <person name="Thomas D.Y."/>
            <person name="Leberer E."/>
        </authorList>
    </citation>
    <scope>FUNCTION IN PHOSPHORYLATION OF MYO3</scope>
</reference>
<reference key="13">
    <citation type="journal article" date="1998" name="Curr. Biol.">
        <title>Actin cytoskeleton organization regulated by the PAK family of protein kinases.</title>
        <authorList>
            <person name="Eby J.J."/>
            <person name="Holly S.P."/>
            <person name="van Drogen F."/>
            <person name="Grishin A.V."/>
            <person name="Peter M."/>
            <person name="Drubin D.G."/>
            <person name="Blumer K.J."/>
        </authorList>
    </citation>
    <scope>FUNCTION</scope>
</reference>
<reference key="14">
    <citation type="journal article" date="1998" name="J. Biol. Chem.">
        <title>Cell cycle- and Cln2p-Cdc28p-dependent phosphorylation of the yeast Ste20p protein kinase.</title>
        <authorList>
            <person name="Wu C."/>
            <person name="Leeuw T."/>
            <person name="Leberer E."/>
            <person name="Thomas D.Y."/>
            <person name="Whiteway M."/>
        </authorList>
    </citation>
    <scope>PHOSPHORYLATION BY THE CLN2-CDC28 COMPLEX</scope>
</reference>
<reference key="15">
    <citation type="journal article" date="1998" name="Nature">
        <title>Interaction of a G-protein beta-subunit with a conserved sequence in Ste20/PAK family protein kinases.</title>
        <authorList>
            <person name="Leeuw T."/>
            <person name="Wu C."/>
            <person name="Schrag J.D."/>
            <person name="Whiteway M."/>
            <person name="Thomas D.Y."/>
            <person name="Leberer E."/>
        </authorList>
    </citation>
    <scope>FUNCTION</scope>
    <scope>INTERACTION WITH STE4</scope>
</reference>
<reference key="16">
    <citation type="journal article" date="1999" name="J. Cell Biol.">
        <title>PAK-family kinases regulate cell and actin polarization throughout the cell cycle of Saccharomyces cerevisiae.</title>
        <authorList>
            <person name="Holly S.P."/>
            <person name="Blumer K.J."/>
        </authorList>
    </citation>
    <scope>FUNCTION</scope>
</reference>
<reference key="17">
    <citation type="journal article" date="1999" name="Proc. Natl. Acad. Sci. U.S.A.">
        <title>Accurate quantitation of protein expression and site-specific phosphorylation.</title>
        <authorList>
            <person name="Oda Y."/>
            <person name="Huang K."/>
            <person name="Cross F.R."/>
            <person name="Cowburn D."/>
            <person name="Chait B.T."/>
        </authorList>
    </citation>
    <scope>INTERACTION WITH CLN2</scope>
    <scope>IDENTIFICATION BY MASS SPECTROMETRY</scope>
    <scope>PHOSPHORYLATION AT SER-547; SER-562; THR-573; SER-585 AND THR-773</scope>
</reference>
<reference key="18">
    <citation type="journal article" date="2000" name="Curr. Biol.">
        <title>Phosphorylation of the MEKK Ste11p by the PAK-like kinase Ste20p is required for MAP kinase signaling in vivo.</title>
        <authorList>
            <person name="van Drogen F."/>
            <person name="O'Rourke S.M."/>
            <person name="Stucke V.M."/>
            <person name="Jaquenoud M."/>
            <person name="Neiman A.M."/>
            <person name="Peter M."/>
        </authorList>
    </citation>
    <scope>FUNCTION IN PHOSPHORYLATION OF STE11</scope>
</reference>
<reference key="19">
    <citation type="journal article" date="2000" name="EMBO J.">
        <title>Yeast Cdc42 GTPase and Ste20 PAK-like kinase regulate Sho1-dependent activation of the Hog1 MAPK pathway.</title>
        <authorList>
            <person name="Raitt D.C."/>
            <person name="Posas F."/>
            <person name="Saito H."/>
        </authorList>
    </citation>
    <scope>FUNCTION</scope>
</reference>
<reference key="20">
    <citation type="journal article" date="2000" name="Mol. Cell. Biol.">
        <title>Role of Cdc42p in pheromone-stimulated signal transduction in Saccharomyces cerevisiae.</title>
        <authorList>
            <person name="Moskow J.J."/>
            <person name="Gladfelter A.S."/>
            <person name="Lamson R.E."/>
            <person name="Pryciak P.M."/>
            <person name="Lew D.J."/>
        </authorList>
    </citation>
    <scope>FUNCTION</scope>
    <scope>INTERACTION WITH CDC42</scope>
    <scope>SUBCELLULAR LOCATION</scope>
</reference>
<reference key="21">
    <citation type="journal article" date="2000" name="Mol. Cell. Biol.">
        <title>Saccharomyces cerevisiae cdc42p GTPase is involved in preventing the recurrence of bud emergence during the cell cycle.</title>
        <authorList>
            <person name="Richman T.J."/>
            <person name="Johnson D.I."/>
        </authorList>
    </citation>
    <scope>INTERACTION WITH CDC42</scope>
</reference>
<reference key="22">
    <citation type="journal article" date="2002" name="Eukaryot. Cell">
        <title>GTPase-activating proteins for Cdc42.</title>
        <authorList>
            <person name="Smith G.R."/>
            <person name="Givan S.A."/>
            <person name="Cullen P."/>
            <person name="Sprague G.F. Jr."/>
        </authorList>
    </citation>
    <scope>INTERACTION WITH CDC42</scope>
</reference>
<reference key="23">
    <citation type="journal article" date="2002" name="Mol. Cell. Biol.">
        <title>Cdc42 regulation of kinase activity and signaling by the yeast p21-activated kinase Ste20.</title>
        <authorList>
            <person name="Lamson R.E."/>
            <person name="Winters M.J."/>
            <person name="Pryciak P.M."/>
        </authorList>
    </citation>
    <scope>FUNCTION</scope>
    <scope>INTERACTION WITH CDC42</scope>
    <scope>MUTAGENESIS OF SER-338 AND HIS-345</scope>
</reference>
<reference key="24">
    <citation type="journal article" date="2003" name="Genetics">
        <title>Genetic analysis of the interface between Cdc42p and the CRIB domain of Ste20p in Saccharomyces cerevisiae.</title>
        <authorList>
            <person name="Ash J."/>
            <person name="Wu C."/>
            <person name="Larocque R."/>
            <person name="Jamal M."/>
            <person name="Stevens W."/>
            <person name="Osborne M."/>
            <person name="Thomas D.Y."/>
            <person name="Whiteway M."/>
        </authorList>
    </citation>
    <scope>INTERACTION WITH CDC42</scope>
    <scope>MUTAGENESIS OF HIS-345 AND HIS-348</scope>
    <scope>SUBCELLULAR LOCATION</scope>
</reference>
<reference key="25">
    <citation type="journal article" date="2003" name="Mol. Biol. Cell">
        <title>Synthetic lethal analysis implicates Ste20p, a p21-activated protein kinase, in polarisome activation.</title>
        <authorList>
            <person name="Goehring A.S."/>
            <person name="Mitchell D.A."/>
            <person name="Tong A.H."/>
            <person name="Keniry M.E."/>
            <person name="Boone C."/>
            <person name="Sprague G.F. Jr."/>
        </authorList>
    </citation>
    <scope>FUNCTION</scope>
</reference>
<reference key="26">
    <citation type="journal article" date="2003" name="Mol. Cell. Biol.">
        <title>Identification of p21-activated kinase specificity determinants in budding yeast: a single amino acid substitution imparts Ste20 specificity to Cla4.</title>
        <authorList>
            <person name="Keniry M.E."/>
            <person name="Sprague G.F. Jr."/>
        </authorList>
    </citation>
    <scope>FUNCTION</scope>
</reference>
<reference key="27">
    <citation type="journal article" date="2003" name="Nature">
        <title>Global analysis of protein expression in yeast.</title>
        <authorList>
            <person name="Ghaemmaghami S."/>
            <person name="Huh W.-K."/>
            <person name="Bower K."/>
            <person name="Howson R.W."/>
            <person name="Belle A."/>
            <person name="Dephoure N."/>
            <person name="O'Shea E.K."/>
            <person name="Weissman J.S."/>
        </authorList>
    </citation>
    <scope>LEVEL OF PROTEIN EXPRESSION [LARGE SCALE ANALYSIS]</scope>
</reference>
<reference key="28">
    <citation type="journal article" date="2005" name="Cell">
        <title>Sterile 20 kinase phosphorylates histone H2B at serine 10 during hydrogen peroxide-induced apoptosis in S. cerevisiae.</title>
        <authorList>
            <person name="Ahn S.-H."/>
            <person name="Cheung W.L."/>
            <person name="Hsu J.-Y."/>
            <person name="Diaz R.L."/>
            <person name="Smith M.M."/>
            <person name="Allis C.D."/>
        </authorList>
    </citation>
    <scope>FUNCTION IN PHOSPHORYLATION OF HISTONE H2B</scope>
    <scope>MUTAGENESIS OF LYS-649</scope>
    <scope>SUBCELLULAR LOCATION</scope>
</reference>
<reference key="29">
    <citation type="journal article" date="2005" name="Cell Cycle">
        <title>H2B (Ser10) phosphorylation is induced during apoptosis and meiosis in S. cerevisiae.</title>
        <authorList>
            <person name="Ahn S.-H."/>
            <person name="Henderson K.A."/>
            <person name="Keeney S."/>
            <person name="Allis C.D."/>
        </authorList>
    </citation>
    <scope>FUNCTION IN PHOSPHORYLATION OF HISTONE H2B</scope>
</reference>
<reference key="30">
    <citation type="journal article" date="2005" name="Mol. Cell. Biol.">
        <title>Interaction with the SH3 domain protein Bem1 regulates signaling by the Saccharomyces cerevisiae p21-activated kinase Ste20.</title>
        <authorList>
            <person name="Winters M.J."/>
            <person name="Pryciak P.M."/>
        </authorList>
    </citation>
    <scope>FUNCTION</scope>
    <scope>INTERACTION WITH BEM1</scope>
    <scope>MUTAGENESIS OF PRO-475 AND PRO-477</scope>
    <scope>SUBCELLULAR LOCATION</scope>
</reference>
<reference key="31">
    <citation type="journal article" date="2005" name="Mol. Cell. Proteomics">
        <title>Quantitative phosphoproteomics applied to the yeast pheromone signaling pathway.</title>
        <authorList>
            <person name="Gruhler A."/>
            <person name="Olsen J.V."/>
            <person name="Mohammed S."/>
            <person name="Mortensen P."/>
            <person name="Faergeman N.J."/>
            <person name="Mann M."/>
            <person name="Jensen O.N."/>
        </authorList>
    </citation>
    <scope>IDENTIFICATION BY MASS SPECTROMETRY [LARGE SCALE ANALYSIS]</scope>
    <source>
        <strain>YAL6B</strain>
    </source>
</reference>
<reference key="32">
    <citation type="journal article" date="2007" name="J. Proteome Res.">
        <title>Large-scale phosphorylation analysis of alpha-factor-arrested Saccharomyces cerevisiae.</title>
        <authorList>
            <person name="Li X."/>
            <person name="Gerber S.A."/>
            <person name="Rudner A.D."/>
            <person name="Beausoleil S.A."/>
            <person name="Haas W."/>
            <person name="Villen J."/>
            <person name="Elias J.E."/>
            <person name="Gygi S.P."/>
        </authorList>
    </citation>
    <scope>PHOSPHORYLATION [LARGE SCALE ANALYSIS] AT SER-169; THR-203; SER-562 AND SER-585</scope>
    <scope>IDENTIFICATION BY MASS SPECTROMETRY [LARGE SCALE ANALYSIS]</scope>
    <source>
        <strain>ADR376</strain>
    </source>
</reference>
<reference key="33">
    <citation type="journal article" date="2007" name="Proc. Natl. Acad. Sci. U.S.A.">
        <title>Analysis of phosphorylation sites on proteins from Saccharomyces cerevisiae by electron transfer dissociation (ETD) mass spectrometry.</title>
        <authorList>
            <person name="Chi A."/>
            <person name="Huttenhower C."/>
            <person name="Geer L.Y."/>
            <person name="Coon J.J."/>
            <person name="Syka J.E.P."/>
            <person name="Bai D.L."/>
            <person name="Shabanowitz J."/>
            <person name="Burke D.J."/>
            <person name="Troyanskaya O.G."/>
            <person name="Hunt D.F."/>
        </authorList>
    </citation>
    <scope>PHOSPHORYLATION [LARGE SCALE ANALYSIS] AT SER-562</scope>
    <scope>IDENTIFICATION BY MASS SPECTROMETRY [LARGE SCALE ANALYSIS]</scope>
</reference>
<reference key="34">
    <citation type="journal article" date="2008" name="Mol. Cell. Proteomics">
        <title>A multidimensional chromatography technology for in-depth phosphoproteome analysis.</title>
        <authorList>
            <person name="Albuquerque C.P."/>
            <person name="Smolka M.B."/>
            <person name="Payne S.H."/>
            <person name="Bafna V."/>
            <person name="Eng J."/>
            <person name="Zhou H."/>
        </authorList>
    </citation>
    <scope>PHOSPHORYLATION [LARGE SCALE ANALYSIS] AT SER-165; THR-167; THR-203; SER-502; SER-924 AND THR-927</scope>
    <scope>IDENTIFICATION BY MASS SPECTROMETRY [LARGE SCALE ANALYSIS]</scope>
</reference>
<reference key="35">
    <citation type="journal article" date="2009" name="Science">
        <title>Global analysis of Cdk1 substrate phosphorylation sites provides insights into evolution.</title>
        <authorList>
            <person name="Holt L.J."/>
            <person name="Tuch B.B."/>
            <person name="Villen J."/>
            <person name="Johnson A.D."/>
            <person name="Gygi S.P."/>
            <person name="Morgan D.O."/>
        </authorList>
    </citation>
    <scope>PHOSPHORYLATION [LARGE SCALE ANALYSIS] AT SER-87; SER-169; THR-203; SER-502; SER-547 AND SER-562</scope>
    <scope>IDENTIFICATION BY MASS SPECTROMETRY [LARGE SCALE ANALYSIS]</scope>
</reference>
<reference key="36">
    <citation type="journal article" date="2012" name="Proc. Natl. Acad. Sci. U.S.A.">
        <title>N-terminal acetylome analyses and functional insights of the N-terminal acetyltransferase NatB.</title>
        <authorList>
            <person name="Van Damme P."/>
            <person name="Lasa M."/>
            <person name="Polevoda B."/>
            <person name="Gazquez C."/>
            <person name="Elosegui-Artola A."/>
            <person name="Kim D.S."/>
            <person name="De Juan-Pardo E."/>
            <person name="Demeyer K."/>
            <person name="Hole K."/>
            <person name="Larrea E."/>
            <person name="Timmerman E."/>
            <person name="Prieto J."/>
            <person name="Arnesen T."/>
            <person name="Sherman F."/>
            <person name="Gevaert K."/>
            <person name="Aldabe R."/>
        </authorList>
    </citation>
    <scope>ACETYLATION [LARGE SCALE ANALYSIS] AT SER-2</scope>
    <scope>CLEAVAGE OF INITIATOR METHIONINE [LARGE SCALE ANALYSIS]</scope>
    <scope>IDENTIFICATION BY MASS SPECTROMETRY [LARGE SCALE ANALYSIS]</scope>
</reference>
<keyword id="KW-0002">3D-structure</keyword>
<keyword id="KW-0007">Acetylation</keyword>
<keyword id="KW-0067">ATP-binding</keyword>
<keyword id="KW-0131">Cell cycle</keyword>
<keyword id="KW-0963">Cytoplasm</keyword>
<keyword id="KW-0903">Direct protein sequencing</keyword>
<keyword id="KW-0418">Kinase</keyword>
<keyword id="KW-0547">Nucleotide-binding</keyword>
<keyword id="KW-0539">Nucleus</keyword>
<keyword id="KW-0589">Pheromone response</keyword>
<keyword id="KW-0597">Phosphoprotein</keyword>
<keyword id="KW-1185">Reference proteome</keyword>
<keyword id="KW-0723">Serine/threonine-protein kinase</keyword>
<keyword id="KW-0808">Transferase</keyword>
<sequence>MSNDPSAVSELPDKDSLDNGISNDNERAMGGNGDGGDGLRLPRTTGTLNVNALQKGTNAAHEAGGYKSMDPAKNAETTNDDDNNVVSLDDPIQFTRVSSSSVISGMSSSMSPHSNIDETKSLEAVTPNINTSNITPDHSADNTFSTINASESDHQFNDTLLSKLSLTDSTETIENNATVKHQQPVASSTVNSNKSSTDIRRATPVSTPVISKPSMTTTPRQINSASHSLSNPKHKQHKPKVKPSKPEAKSKPVSVKKSFPSKNPLKNSSPPKKQTEKSYYSSSSKKRKSGSNSGTLRMKDVFTSFVQNIKRNSQDDKRASSSSNNSSSSSITTALRISTPYNAKHIHHVGVDSKTGEYTGLPEEWEKLLTSSGISKREQQQNMQAVMDIVKFYQDVTETNGEDKMFKTFNTTTGLPGSPQVSTPPANSFNKFPPSTSDSHNYGSRTGTPMSNHVMSPTLNTDSSSANGKFIPSRPAPKPPSSASASAPIIKSPVMNSAANVSPLKQTHAPTTPNRTSPNRSSISRNATLKKEEQPLPPIPPTKSKTSPIISTAHTPQQVAQSPKAPAQETVTTPTSKPAQARSLSKELNEKKREERERRKKQLYAKLNEICSDGDPSTKYANLVKIGQGASGGVYTAYEIGTNVSVAIKQMNLEKQPKKELIINEILVMKGSKHPNIVNFIDSYVLKGDLWVIMEYMEGGSLTDVVTHCILTEGQIGAVCRETLSGLEFLHSKGVLHRDIKSDNILLSMEGDIKLTDFGFCAQINELNLKRTTMVGTPYWMAPEVVSRKEYGPKVDIWSLGIMIIEMIEGEPPYLNETPLRALYLIATNGTPKLKEPENLSSSLKKFLDWCLCVEPEDRASATELLHDEYITEIAEANSSLAPLVKLARLKKVAENMDADEDNDDDNDNEHINKTNNCDDNNDSKETVNLDVTEDDKQK</sequence>
<gene>
    <name type="primary">STE20</name>
    <name type="ordered locus">YHL007C</name>
</gene>
<proteinExistence type="evidence at protein level"/>
<protein>
    <recommendedName>
        <fullName>Serine/threonine-protein kinase STE20</fullName>
        <ecNumber>2.7.11.1</ecNumber>
    </recommendedName>
</protein>
<dbReference type="EC" id="2.7.11.1"/>
<dbReference type="EMBL" id="M94719">
    <property type="protein sequence ID" value="AAA35111.1"/>
    <property type="molecule type" value="Genomic_DNA"/>
</dbReference>
<dbReference type="EMBL" id="L04655">
    <property type="protein sequence ID" value="AAA35038.1"/>
    <property type="molecule type" value="Genomic_DNA"/>
</dbReference>
<dbReference type="EMBL" id="L04655">
    <property type="protein sequence ID" value="AAA35039.1"/>
    <property type="molecule type" value="Genomic_DNA"/>
</dbReference>
<dbReference type="EMBL" id="U11581">
    <property type="protein sequence ID" value="AAB69747.1"/>
    <property type="molecule type" value="Genomic_DNA"/>
</dbReference>
<dbReference type="EMBL" id="BK006934">
    <property type="protein sequence ID" value="DAA06681.1"/>
    <property type="molecule type" value="Genomic_DNA"/>
</dbReference>
<dbReference type="PIR" id="S28394">
    <property type="entry name" value="S28394"/>
</dbReference>
<dbReference type="RefSeq" id="NP_011856.1">
    <property type="nucleotide sequence ID" value="NM_001179087.1"/>
</dbReference>
<dbReference type="PDB" id="2KYM">
    <property type="method" value="NMR"/>
    <property type="chains" value="B=468-483"/>
</dbReference>
<dbReference type="PDB" id="2LCS">
    <property type="method" value="NMR"/>
    <property type="chains" value="B=468-483"/>
</dbReference>
<dbReference type="PDB" id="2RQW">
    <property type="method" value="NMR"/>
    <property type="chains" value="B=463-486"/>
</dbReference>
<dbReference type="PDBsum" id="2KYM"/>
<dbReference type="PDBsum" id="2LCS"/>
<dbReference type="PDBsum" id="2RQW"/>
<dbReference type="BMRB" id="Q03497"/>
<dbReference type="SMR" id="Q03497"/>
<dbReference type="BioGRID" id="36419">
    <property type="interactions" value="281"/>
</dbReference>
<dbReference type="DIP" id="DIP-712N"/>
<dbReference type="FunCoup" id="Q03497">
    <property type="interactions" value="594"/>
</dbReference>
<dbReference type="IntAct" id="Q03497">
    <property type="interactions" value="37"/>
</dbReference>
<dbReference type="MINT" id="Q03497"/>
<dbReference type="STRING" id="4932.YHL007C"/>
<dbReference type="GlyGen" id="Q03497">
    <property type="glycosylation" value="3 sites, 1 O-linked glycan (3 sites)"/>
</dbReference>
<dbReference type="iPTMnet" id="Q03497"/>
<dbReference type="PaxDb" id="4932-YHL007C"/>
<dbReference type="PeptideAtlas" id="Q03497"/>
<dbReference type="EnsemblFungi" id="YHL007C_mRNA">
    <property type="protein sequence ID" value="YHL007C"/>
    <property type="gene ID" value="YHL007C"/>
</dbReference>
<dbReference type="GeneID" id="856382"/>
<dbReference type="KEGG" id="sce:YHL007C"/>
<dbReference type="AGR" id="SGD:S000000999"/>
<dbReference type="SGD" id="S000000999">
    <property type="gene designation" value="STE20"/>
</dbReference>
<dbReference type="VEuPathDB" id="FungiDB:YHL007C"/>
<dbReference type="eggNOG" id="KOG0578">
    <property type="taxonomic scope" value="Eukaryota"/>
</dbReference>
<dbReference type="GeneTree" id="ENSGT00940000165560"/>
<dbReference type="HOGENOM" id="CLU_000288_26_3_1"/>
<dbReference type="InParanoid" id="Q03497"/>
<dbReference type="OMA" id="YNAKHVH"/>
<dbReference type="OrthoDB" id="248923at2759"/>
<dbReference type="BioCyc" id="YEAST:G3O-31029-MONOMER"/>
<dbReference type="BRENDA" id="2.7.11.1">
    <property type="organism ID" value="984"/>
</dbReference>
<dbReference type="Reactome" id="R-SCE-2029482">
    <property type="pathway name" value="Regulation of actin dynamics for phagocytic cup formation"/>
</dbReference>
<dbReference type="Reactome" id="R-SCE-389359">
    <property type="pathway name" value="CD28 dependent Vav1 pathway"/>
</dbReference>
<dbReference type="Reactome" id="R-SCE-5627123">
    <property type="pathway name" value="RHO GTPases activate PAKs"/>
</dbReference>
<dbReference type="Reactome" id="R-SCE-5687128">
    <property type="pathway name" value="MAPK6/MAPK4 signaling"/>
</dbReference>
<dbReference type="Reactome" id="R-SCE-9013405">
    <property type="pathway name" value="RHOD GTPase cycle"/>
</dbReference>
<dbReference type="Reactome" id="R-SCE-9013406">
    <property type="pathway name" value="RHOQ GTPase cycle"/>
</dbReference>
<dbReference type="Reactome" id="R-SCE-9013420">
    <property type="pathway name" value="RHOU GTPase cycle"/>
</dbReference>
<dbReference type="Reactome" id="R-SCE-9013424">
    <property type="pathway name" value="RHOV GTPase cycle"/>
</dbReference>
<dbReference type="BioGRID-ORCS" id="856382">
    <property type="hits" value="0 hits in 13 CRISPR screens"/>
</dbReference>
<dbReference type="PRO" id="PR:Q03497"/>
<dbReference type="Proteomes" id="UP000002311">
    <property type="component" value="Chromosome VIII"/>
</dbReference>
<dbReference type="RNAct" id="Q03497">
    <property type="molecule type" value="protein"/>
</dbReference>
<dbReference type="GO" id="GO:0005737">
    <property type="term" value="C:cytoplasm"/>
    <property type="evidence" value="ECO:0000314"/>
    <property type="project" value="SGD"/>
</dbReference>
<dbReference type="GO" id="GO:0000131">
    <property type="term" value="C:incipient cellular bud site"/>
    <property type="evidence" value="ECO:0000314"/>
    <property type="project" value="SGD"/>
</dbReference>
<dbReference type="GO" id="GO:0043332">
    <property type="term" value="C:mating projection tip"/>
    <property type="evidence" value="ECO:0000314"/>
    <property type="project" value="SGD"/>
</dbReference>
<dbReference type="GO" id="GO:0005634">
    <property type="term" value="C:nucleus"/>
    <property type="evidence" value="ECO:0000314"/>
    <property type="project" value="SGD"/>
</dbReference>
<dbReference type="GO" id="GO:0005886">
    <property type="term" value="C:plasma membrane"/>
    <property type="evidence" value="ECO:0007005"/>
    <property type="project" value="SGD"/>
</dbReference>
<dbReference type="GO" id="GO:0005524">
    <property type="term" value="F:ATP binding"/>
    <property type="evidence" value="ECO:0007669"/>
    <property type="project" value="UniProtKB-KW"/>
</dbReference>
<dbReference type="GO" id="GO:0044025">
    <property type="term" value="F:histone H2BS14 kinase activity"/>
    <property type="evidence" value="ECO:0000314"/>
    <property type="project" value="SGD"/>
</dbReference>
<dbReference type="GO" id="GO:0008349">
    <property type="term" value="F:MAP kinase kinase kinase kinase activity"/>
    <property type="evidence" value="ECO:0000314"/>
    <property type="project" value="SGD"/>
</dbReference>
<dbReference type="GO" id="GO:0003729">
    <property type="term" value="F:mRNA binding"/>
    <property type="evidence" value="ECO:0007005"/>
    <property type="project" value="SGD"/>
</dbReference>
<dbReference type="GO" id="GO:0004672">
    <property type="term" value="F:protein kinase activity"/>
    <property type="evidence" value="ECO:0007005"/>
    <property type="project" value="SGD"/>
</dbReference>
<dbReference type="GO" id="GO:0106310">
    <property type="term" value="F:protein serine kinase activity"/>
    <property type="evidence" value="ECO:0007669"/>
    <property type="project" value="RHEA"/>
</dbReference>
<dbReference type="GO" id="GO:0004674">
    <property type="term" value="F:protein serine/threonine kinase activity"/>
    <property type="evidence" value="ECO:0000318"/>
    <property type="project" value="GO_Central"/>
</dbReference>
<dbReference type="GO" id="GO:0007121">
    <property type="term" value="P:bipolar cellular bud site selection"/>
    <property type="evidence" value="ECO:0000315"/>
    <property type="project" value="SGD"/>
</dbReference>
<dbReference type="GO" id="GO:0007118">
    <property type="term" value="P:budding cell apical bud growth"/>
    <property type="evidence" value="ECO:0000315"/>
    <property type="project" value="SGD"/>
</dbReference>
<dbReference type="GO" id="GO:0000282">
    <property type="term" value="P:cellular bud site selection"/>
    <property type="evidence" value="ECO:0007001"/>
    <property type="project" value="SGD"/>
</dbReference>
<dbReference type="GO" id="GO:0070301">
    <property type="term" value="P:cellular response to hydrogen peroxide"/>
    <property type="evidence" value="ECO:0000314"/>
    <property type="project" value="SGD"/>
</dbReference>
<dbReference type="GO" id="GO:0009267">
    <property type="term" value="P:cellular response to starvation"/>
    <property type="evidence" value="ECO:0000318"/>
    <property type="project" value="GO_Central"/>
</dbReference>
<dbReference type="GO" id="GO:0035556">
    <property type="term" value="P:intracellular signal transduction"/>
    <property type="evidence" value="ECO:0000318"/>
    <property type="project" value="GO_Central"/>
</dbReference>
<dbReference type="GO" id="GO:0001403">
    <property type="term" value="P:invasive growth in response to glucose limitation"/>
    <property type="evidence" value="ECO:0000315"/>
    <property type="project" value="SGD"/>
</dbReference>
<dbReference type="GO" id="GO:0000165">
    <property type="term" value="P:MAPK cascade"/>
    <property type="evidence" value="ECO:0000314"/>
    <property type="project" value="SGD"/>
</dbReference>
<dbReference type="GO" id="GO:0010629">
    <property type="term" value="P:negative regulation of gene expression"/>
    <property type="evidence" value="ECO:0000315"/>
    <property type="project" value="SGD"/>
</dbReference>
<dbReference type="GO" id="GO:2000910">
    <property type="term" value="P:negative regulation of sterol import"/>
    <property type="evidence" value="ECO:0000315"/>
    <property type="project" value="SGD"/>
</dbReference>
<dbReference type="GO" id="GO:0000122">
    <property type="term" value="P:negative regulation of transcription by RNA polymerase II"/>
    <property type="evidence" value="ECO:0000315"/>
    <property type="project" value="SGD"/>
</dbReference>
<dbReference type="GO" id="GO:0007232">
    <property type="term" value="P:osmosensory signaling pathway via Sho1 osmosensor"/>
    <property type="evidence" value="ECO:0000315"/>
    <property type="project" value="SGD"/>
</dbReference>
<dbReference type="GO" id="GO:0000750">
    <property type="term" value="P:pheromone-dependent signal transduction involved in conjugation with cellular fusion"/>
    <property type="evidence" value="ECO:0000315"/>
    <property type="project" value="SGD"/>
</dbReference>
<dbReference type="GO" id="GO:0043065">
    <property type="term" value="P:positive regulation of apoptotic process"/>
    <property type="evidence" value="ECO:0000315"/>
    <property type="project" value="SGD"/>
</dbReference>
<dbReference type="GO" id="GO:0007124">
    <property type="term" value="P:pseudohyphal growth"/>
    <property type="evidence" value="ECO:0000315"/>
    <property type="project" value="SGD"/>
</dbReference>
<dbReference type="GO" id="GO:0007096">
    <property type="term" value="P:regulation of exit from mitosis"/>
    <property type="evidence" value="ECO:0000315"/>
    <property type="project" value="SGD"/>
</dbReference>
<dbReference type="GO" id="GO:0043408">
    <property type="term" value="P:regulation of MAPK cascade"/>
    <property type="evidence" value="ECO:0000318"/>
    <property type="project" value="GO_Central"/>
</dbReference>
<dbReference type="GO" id="GO:0000749">
    <property type="term" value="P:response to pheromone triggering conjugation with cellular fusion"/>
    <property type="evidence" value="ECO:0000353"/>
    <property type="project" value="SGD"/>
</dbReference>
<dbReference type="GO" id="GO:0001402">
    <property type="term" value="P:signal transduction involved in filamentous growth"/>
    <property type="evidence" value="ECO:0000315"/>
    <property type="project" value="SGD"/>
</dbReference>
<dbReference type="GO" id="GO:0035376">
    <property type="term" value="P:sterol import"/>
    <property type="evidence" value="ECO:0000315"/>
    <property type="project" value="SGD"/>
</dbReference>
<dbReference type="GO" id="GO:0034063">
    <property type="term" value="P:stress granule assembly"/>
    <property type="evidence" value="ECO:0000315"/>
    <property type="project" value="SGD"/>
</dbReference>
<dbReference type="GO" id="GO:0000011">
    <property type="term" value="P:vacuole inheritance"/>
    <property type="evidence" value="ECO:0000315"/>
    <property type="project" value="SGD"/>
</dbReference>
<dbReference type="CDD" id="cd01093">
    <property type="entry name" value="CRIB_PAK_like"/>
    <property type="match status" value="1"/>
</dbReference>
<dbReference type="CDD" id="cd06614">
    <property type="entry name" value="STKc_PAK"/>
    <property type="match status" value="1"/>
</dbReference>
<dbReference type="FunFam" id="1.10.510.10:FF:000011">
    <property type="entry name" value="Non-specific serine/threonine protein kinase"/>
    <property type="match status" value="1"/>
</dbReference>
<dbReference type="FunFam" id="3.30.200.20:FF:000385">
    <property type="entry name" value="Non-specific serine/threonine protein kinase"/>
    <property type="match status" value="1"/>
</dbReference>
<dbReference type="FunFam" id="3.90.810.10:FF:000007">
    <property type="entry name" value="Non-specific serine/threonine protein kinase"/>
    <property type="match status" value="1"/>
</dbReference>
<dbReference type="Gene3D" id="3.90.810.10">
    <property type="entry name" value="CRIB domain"/>
    <property type="match status" value="1"/>
</dbReference>
<dbReference type="Gene3D" id="3.30.200.20">
    <property type="entry name" value="Phosphorylase Kinase, domain 1"/>
    <property type="match status" value="1"/>
</dbReference>
<dbReference type="Gene3D" id="1.10.510.10">
    <property type="entry name" value="Transferase(Phosphotransferase) domain 1"/>
    <property type="match status" value="1"/>
</dbReference>
<dbReference type="InterPro" id="IPR000095">
    <property type="entry name" value="CRIB_dom"/>
</dbReference>
<dbReference type="InterPro" id="IPR036936">
    <property type="entry name" value="CRIB_dom_sf"/>
</dbReference>
<dbReference type="InterPro" id="IPR011009">
    <property type="entry name" value="Kinase-like_dom_sf"/>
</dbReference>
<dbReference type="InterPro" id="IPR051931">
    <property type="entry name" value="PAK3-like"/>
</dbReference>
<dbReference type="InterPro" id="IPR033923">
    <property type="entry name" value="PAK_BD"/>
</dbReference>
<dbReference type="InterPro" id="IPR000719">
    <property type="entry name" value="Prot_kinase_dom"/>
</dbReference>
<dbReference type="InterPro" id="IPR017441">
    <property type="entry name" value="Protein_kinase_ATP_BS"/>
</dbReference>
<dbReference type="InterPro" id="IPR008271">
    <property type="entry name" value="Ser/Thr_kinase_AS"/>
</dbReference>
<dbReference type="PANTHER" id="PTHR45832">
    <property type="entry name" value="SERINE/THREONINE-PROTEIN KINASE SAMKA-RELATED-RELATED"/>
    <property type="match status" value="1"/>
</dbReference>
<dbReference type="PANTHER" id="PTHR45832:SF22">
    <property type="entry name" value="SERINE_THREONINE-PROTEIN KINASE SAMKA-RELATED"/>
    <property type="match status" value="1"/>
</dbReference>
<dbReference type="Pfam" id="PF00786">
    <property type="entry name" value="PBD"/>
    <property type="match status" value="1"/>
</dbReference>
<dbReference type="Pfam" id="PF00069">
    <property type="entry name" value="Pkinase"/>
    <property type="match status" value="1"/>
</dbReference>
<dbReference type="SMART" id="SM00285">
    <property type="entry name" value="PBD"/>
    <property type="match status" value="1"/>
</dbReference>
<dbReference type="SMART" id="SM00220">
    <property type="entry name" value="S_TKc"/>
    <property type="match status" value="1"/>
</dbReference>
<dbReference type="SUPFAM" id="SSF56112">
    <property type="entry name" value="Protein kinase-like (PK-like)"/>
    <property type="match status" value="1"/>
</dbReference>
<dbReference type="PROSITE" id="PS50108">
    <property type="entry name" value="CRIB"/>
    <property type="match status" value="1"/>
</dbReference>
<dbReference type="PROSITE" id="PS00107">
    <property type="entry name" value="PROTEIN_KINASE_ATP"/>
    <property type="match status" value="1"/>
</dbReference>
<dbReference type="PROSITE" id="PS50011">
    <property type="entry name" value="PROTEIN_KINASE_DOM"/>
    <property type="match status" value="1"/>
</dbReference>
<dbReference type="PROSITE" id="PS00108">
    <property type="entry name" value="PROTEIN_KINASE_ST"/>
    <property type="match status" value="1"/>
</dbReference>
<evidence type="ECO:0000255" key="1">
    <source>
        <dbReference type="PROSITE-ProRule" id="PRU00057"/>
    </source>
</evidence>
<evidence type="ECO:0000255" key="2">
    <source>
        <dbReference type="PROSITE-ProRule" id="PRU00159"/>
    </source>
</evidence>
<evidence type="ECO:0000255" key="3">
    <source>
        <dbReference type="PROSITE-ProRule" id="PRU10027"/>
    </source>
</evidence>
<evidence type="ECO:0000256" key="4">
    <source>
        <dbReference type="SAM" id="MobiDB-lite"/>
    </source>
</evidence>
<evidence type="ECO:0000269" key="5">
    <source>
    </source>
</evidence>
<evidence type="ECO:0000269" key="6">
    <source>
    </source>
</evidence>
<evidence type="ECO:0000269" key="7">
    <source>
    </source>
</evidence>
<evidence type="ECO:0000269" key="8">
    <source>
    </source>
</evidence>
<evidence type="ECO:0000269" key="9">
    <source>
    </source>
</evidence>
<evidence type="ECO:0000269" key="10">
    <source>
    </source>
</evidence>
<evidence type="ECO:0000269" key="11">
    <source>
    </source>
</evidence>
<evidence type="ECO:0000269" key="12">
    <source>
    </source>
</evidence>
<evidence type="ECO:0000269" key="13">
    <source>
    </source>
</evidence>
<evidence type="ECO:0000269" key="14">
    <source>
    </source>
</evidence>
<evidence type="ECO:0000269" key="15">
    <source>
    </source>
</evidence>
<evidence type="ECO:0000269" key="16">
    <source>
    </source>
</evidence>
<evidence type="ECO:0000269" key="17">
    <source>
    </source>
</evidence>
<evidence type="ECO:0000269" key="18">
    <source>
    </source>
</evidence>
<evidence type="ECO:0000269" key="19">
    <source>
    </source>
</evidence>
<evidence type="ECO:0000269" key="20">
    <source>
    </source>
</evidence>
<evidence type="ECO:0000269" key="21">
    <source>
    </source>
</evidence>
<evidence type="ECO:0000269" key="22">
    <source>
    </source>
</evidence>
<evidence type="ECO:0000269" key="23">
    <source>
    </source>
</evidence>
<evidence type="ECO:0000269" key="24">
    <source>
    </source>
</evidence>
<evidence type="ECO:0000269" key="25">
    <source>
    </source>
</evidence>
<evidence type="ECO:0000269" key="26">
    <source>
    </source>
</evidence>
<evidence type="ECO:0000269" key="27">
    <source>
    </source>
</evidence>
<evidence type="ECO:0000269" key="28">
    <source>
    </source>
</evidence>
<evidence type="ECO:0000269" key="29">
    <source>
    </source>
</evidence>
<evidence type="ECO:0000269" key="30">
    <source>
    </source>
</evidence>
<evidence type="ECO:0000269" key="31">
    <source>
    </source>
</evidence>
<evidence type="ECO:0000305" key="32"/>
<evidence type="ECO:0007744" key="33">
    <source>
    </source>
</evidence>
<evidence type="ECO:0007744" key="34">
    <source>
    </source>
</evidence>
<evidence type="ECO:0007744" key="35">
    <source>
    </source>
</evidence>
<evidence type="ECO:0007744" key="36">
    <source>
    </source>
</evidence>
<evidence type="ECO:0007744" key="37">
    <source>
    </source>
</evidence>
<organism>
    <name type="scientific">Saccharomyces cerevisiae (strain ATCC 204508 / S288c)</name>
    <name type="common">Baker's yeast</name>
    <dbReference type="NCBI Taxonomy" id="559292"/>
    <lineage>
        <taxon>Eukaryota</taxon>
        <taxon>Fungi</taxon>
        <taxon>Dikarya</taxon>
        <taxon>Ascomycota</taxon>
        <taxon>Saccharomycotina</taxon>
        <taxon>Saccharomycetes</taxon>
        <taxon>Saccharomycetales</taxon>
        <taxon>Saccharomycetaceae</taxon>
        <taxon>Saccharomyces</taxon>
    </lineage>
</organism>
<name>STE20_YEAST</name>
<comment type="function">
    <text evidence="6 7 8 9 11 14 15 17 18 19 20 22 23 24 25 26 27 29 30 31">MAP4K component of the MAPK pathway required for the mating pheromone response, haploid invasive growth and diploid pseudohyphal development. Links the pheromone response G-protein beta gamma subunits to downstream signaling components. Needed for mating in haploid cells, induction of a mating-specific gene FUS1, induction of mating-specific morphologies, and pheromone-induced proliferation arrest. Required for the regulation of the actin polarization and bud emergence during cell cycle in G1. Involved in the high osmolarity glycerol (HOG) response. Phosphorylates 'Thr-307' and 'Ser-302' or 'Ser-306' of STE11 and 'Ser-357' of MYO3. Phosphorylates histone H2B to form H2BS10ph during meiosis and H(2)O(2)-induced apoptosis. Its interaction with CDC42 is required for both invasive growth and the formation of pseudohyphae. Its interaction with STE4 is required for the pheromone signaling.</text>
</comment>
<comment type="catalytic activity">
    <reaction>
        <text>L-seryl-[protein] + ATP = O-phospho-L-seryl-[protein] + ADP + H(+)</text>
        <dbReference type="Rhea" id="RHEA:17989"/>
        <dbReference type="Rhea" id="RHEA-COMP:9863"/>
        <dbReference type="Rhea" id="RHEA-COMP:11604"/>
        <dbReference type="ChEBI" id="CHEBI:15378"/>
        <dbReference type="ChEBI" id="CHEBI:29999"/>
        <dbReference type="ChEBI" id="CHEBI:30616"/>
        <dbReference type="ChEBI" id="CHEBI:83421"/>
        <dbReference type="ChEBI" id="CHEBI:456216"/>
        <dbReference type="EC" id="2.7.11.1"/>
    </reaction>
</comment>
<comment type="catalytic activity">
    <reaction>
        <text>L-threonyl-[protein] + ATP = O-phospho-L-threonyl-[protein] + ADP + H(+)</text>
        <dbReference type="Rhea" id="RHEA:46608"/>
        <dbReference type="Rhea" id="RHEA-COMP:11060"/>
        <dbReference type="Rhea" id="RHEA-COMP:11605"/>
        <dbReference type="ChEBI" id="CHEBI:15378"/>
        <dbReference type="ChEBI" id="CHEBI:30013"/>
        <dbReference type="ChEBI" id="CHEBI:30616"/>
        <dbReference type="ChEBI" id="CHEBI:61977"/>
        <dbReference type="ChEBI" id="CHEBI:456216"/>
        <dbReference type="EC" id="2.7.11.1"/>
    </reaction>
</comment>
<comment type="subunit">
    <text evidence="5 9 10 11 12 13 19 26 27 28 30">Interacts with BEM1, CDC42, CLN2, STE4 and the 14-3-3 proteins BMH1 and BMH2.</text>
</comment>
<comment type="interaction">
    <interactant intactId="EBI-18285">
        <id>Q03497</id>
    </interactant>
    <interactant intactId="EBI-3508">
        <id>P29366</id>
        <label>BEM1</label>
    </interactant>
    <organismsDiffer>false</organismsDiffer>
    <experiments>11</experiments>
</comment>
<comment type="interaction">
    <interactant intactId="EBI-18285">
        <id>Q03497</id>
    </interactant>
    <interactant intactId="EBI-4274">
        <id>P19073</id>
        <label>CDC42</label>
    </interactant>
    <organismsDiffer>false</organismsDiffer>
    <experiments>6</experiments>
</comment>
<comment type="interaction">
    <interactant intactId="EBI-18285">
        <id>Q03497</id>
    </interactant>
    <interactant intactId="EBI-11670">
        <id>P36006</id>
        <label>MYO3</label>
    </interactant>
    <organismsDiffer>false</organismsDiffer>
    <experiments>3</experiments>
</comment>
<comment type="interaction">
    <interactant intactId="EBI-18285">
        <id>Q03497</id>
    </interactant>
    <interactant intactId="EBI-11687">
        <id>Q04439</id>
        <label>MYO5</label>
    </interactant>
    <organismsDiffer>false</organismsDiffer>
    <experiments>4</experiments>
</comment>
<comment type="interaction">
    <interactant intactId="EBI-18285">
        <id>Q03497</id>
    </interactant>
    <interactant intactId="EBI-34713">
        <id>Q12163</id>
        <label>NBP2</label>
    </interactant>
    <organismsDiffer>false</organismsDiffer>
    <experiments>6</experiments>
</comment>
<comment type="interaction">
    <interactant intactId="EBI-18285">
        <id>Q03497</id>
    </interactant>
    <interactant intactId="EBI-13206">
        <id>P80667</id>
        <label>PEX13</label>
    </interactant>
    <organismsDiffer>false</organismsDiffer>
    <experiments>3</experiments>
</comment>
<comment type="interaction">
    <interactant intactId="EBI-18285">
        <id>Q03497</id>
    </interactant>
    <interactant intactId="EBI-7390">
        <id>P18851</id>
        <label>STE4</label>
    </interactant>
    <organismsDiffer>false</organismsDiffer>
    <experiments>3</experiments>
</comment>
<comment type="subcellular location">
    <subcellularLocation>
        <location>Cytoplasm</location>
    </subcellularLocation>
    <subcellularLocation>
        <location>Nucleus</location>
    </subcellularLocation>
    <text>The translocation from the cytoplasm to the nucleus is stimulated by H(2)O(2). Localizes at bud emergence during cell cycle and the shmoo top during mating, both localizations requiring an interaction with CDC42.</text>
</comment>
<comment type="domain">
    <text>The CRIB domain is required for the association with CDC42.</text>
</comment>
<comment type="PTM">
    <text>Autophosphorylated and phosphorylated by the CLN2-CDC28 complex in a cell cycle dependent manner.</text>
</comment>
<comment type="PTM">
    <text>Autophosphorylated on serine residues.</text>
</comment>
<comment type="miscellaneous">
    <text evidence="16">Present with 259 molecules/cell in log phase SD medium.</text>
</comment>
<comment type="similarity">
    <text evidence="32">Belongs to the protein kinase superfamily. STE Ser/Thr protein kinase family. STE20 subfamily.</text>
</comment>
<feature type="initiator methionine" description="Removed" evidence="37">
    <location>
        <position position="1"/>
    </location>
</feature>
<feature type="chain" id="PRO_0000086686" description="Serine/threonine-protein kinase STE20">
    <location>
        <begin position="2"/>
        <end position="939"/>
    </location>
</feature>
<feature type="domain" description="CRIB" evidence="1">
    <location>
        <begin position="337"/>
        <end position="350"/>
    </location>
</feature>
<feature type="domain" description="Protein kinase" evidence="2">
    <location>
        <begin position="620"/>
        <end position="871"/>
    </location>
</feature>
<feature type="region of interest" description="Disordered" evidence="4">
    <location>
        <begin position="1"/>
        <end position="87"/>
    </location>
</feature>
<feature type="region of interest" description="Disordered" evidence="4">
    <location>
        <begin position="176"/>
        <end position="299"/>
    </location>
</feature>
<feature type="region of interest" description="Disordered" evidence="4">
    <location>
        <begin position="311"/>
        <end position="331"/>
    </location>
</feature>
<feature type="region of interest" description="Disordered" evidence="4">
    <location>
        <begin position="407"/>
        <end position="487"/>
    </location>
</feature>
<feature type="region of interest" description="BEM1-binding">
    <location>
        <begin position="434"/>
        <end position="499"/>
    </location>
</feature>
<feature type="region of interest" description="Disordered" evidence="4">
    <location>
        <begin position="500"/>
        <end position="598"/>
    </location>
</feature>
<feature type="region of interest" description="Disordered" evidence="4">
    <location>
        <begin position="899"/>
        <end position="939"/>
    </location>
</feature>
<feature type="compositionally biased region" description="Polar residues" evidence="4">
    <location>
        <begin position="44"/>
        <end position="57"/>
    </location>
</feature>
<feature type="compositionally biased region" description="Polar residues" evidence="4">
    <location>
        <begin position="176"/>
        <end position="196"/>
    </location>
</feature>
<feature type="compositionally biased region" description="Polar residues" evidence="4">
    <location>
        <begin position="204"/>
        <end position="231"/>
    </location>
</feature>
<feature type="compositionally biased region" description="Basic residues" evidence="4">
    <location>
        <begin position="232"/>
        <end position="243"/>
    </location>
</feature>
<feature type="compositionally biased region" description="Low complexity" evidence="4">
    <location>
        <begin position="251"/>
        <end position="283"/>
    </location>
</feature>
<feature type="compositionally biased region" description="Low complexity" evidence="4">
    <location>
        <begin position="320"/>
        <end position="330"/>
    </location>
</feature>
<feature type="compositionally biased region" description="Polar residues" evidence="4">
    <location>
        <begin position="408"/>
        <end position="467"/>
    </location>
</feature>
<feature type="compositionally biased region" description="Polar residues" evidence="4">
    <location>
        <begin position="500"/>
        <end position="527"/>
    </location>
</feature>
<feature type="compositionally biased region" description="Low complexity" evidence="4">
    <location>
        <begin position="542"/>
        <end position="552"/>
    </location>
</feature>
<feature type="compositionally biased region" description="Polar residues" evidence="4">
    <location>
        <begin position="569"/>
        <end position="578"/>
    </location>
</feature>
<feature type="compositionally biased region" description="Basic and acidic residues" evidence="4">
    <location>
        <begin position="584"/>
        <end position="597"/>
    </location>
</feature>
<feature type="compositionally biased region" description="Acidic residues" evidence="4">
    <location>
        <begin position="899"/>
        <end position="908"/>
    </location>
</feature>
<feature type="active site" description="Proton acceptor" evidence="2 3">
    <location>
        <position position="739"/>
    </location>
</feature>
<feature type="binding site" evidence="2">
    <location>
        <begin position="626"/>
        <end position="634"/>
    </location>
    <ligand>
        <name>ATP</name>
        <dbReference type="ChEBI" id="CHEBI:30616"/>
    </ligand>
</feature>
<feature type="binding site" evidence="2">
    <location>
        <position position="649"/>
    </location>
    <ligand>
        <name>ATP</name>
        <dbReference type="ChEBI" id="CHEBI:30616"/>
    </ligand>
</feature>
<feature type="modified residue" description="N-acetylserine" evidence="37">
    <location>
        <position position="2"/>
    </location>
</feature>
<feature type="modified residue" description="Phosphoserine" evidence="36">
    <location>
        <position position="87"/>
    </location>
</feature>
<feature type="modified residue" description="Phosphoserine" evidence="35">
    <location>
        <position position="165"/>
    </location>
</feature>
<feature type="modified residue" description="Phosphothreonine" evidence="35">
    <location>
        <position position="167"/>
    </location>
</feature>
<feature type="modified residue" description="Phosphoserine" evidence="21 34 36">
    <location>
        <position position="169"/>
    </location>
</feature>
<feature type="modified residue" description="Phosphothreonine" evidence="34 35 36">
    <location>
        <position position="203"/>
    </location>
</feature>
<feature type="modified residue" description="Phosphoserine" evidence="21">
    <location>
        <position position="418"/>
    </location>
</feature>
<feature type="modified residue" description="Phosphoserine" evidence="35 36">
    <location>
        <position position="502"/>
    </location>
</feature>
<feature type="modified residue" description="Phosphoserine" evidence="5 36">
    <location>
        <position position="547"/>
    </location>
</feature>
<feature type="modified residue" description="Phosphoserine" evidence="5 33 34 36">
    <location>
        <position position="562"/>
    </location>
</feature>
<feature type="modified residue" description="Phosphothreonine" evidence="5">
    <location>
        <position position="573"/>
    </location>
</feature>
<feature type="modified residue" description="Phosphoserine" evidence="5 21 34">
    <location>
        <position position="585"/>
    </location>
</feature>
<feature type="modified residue" description="Phosphothreonine" evidence="5">
    <location>
        <position position="773"/>
    </location>
</feature>
<feature type="modified residue" description="Phosphoserine" evidence="35">
    <location>
        <position position="924"/>
    </location>
</feature>
<feature type="modified residue" description="Phosphothreonine" evidence="35">
    <location>
        <position position="927"/>
    </location>
</feature>
<feature type="mutagenesis site" description="Reduces interaction with CDC42." evidence="11">
    <original>S</original>
    <variation>A</variation>
    <location>
        <position position="338"/>
    </location>
</feature>
<feature type="mutagenesis site" description="Reduces interaction with CDC42." evidence="11 13">
    <original>H</original>
    <variation>A</variation>
    <variation>D</variation>
    <location>
        <position position="345"/>
    </location>
</feature>
<feature type="mutagenesis site" description="Reduces interaction with CDC42." evidence="13">
    <original>H</original>
    <variation>D</variation>
    <location>
        <position position="348"/>
    </location>
</feature>
<feature type="mutagenesis site" description="Impairs interaction with BEM1; when associated with A-477." evidence="19">
    <original>P</original>
    <variation>G</variation>
    <location>
        <position position="475"/>
    </location>
</feature>
<feature type="mutagenesis site" description="Impairs interaction with BEM1; when associated with G-475." evidence="19">
    <original>P</original>
    <variation>A</variation>
    <location>
        <position position="477"/>
    </location>
</feature>
<feature type="mutagenesis site" description="Impairs phosphorylation of STE11 and histone H2B and mating efficiency." evidence="18 22">
    <original>K</original>
    <variation>R</variation>
    <location>
        <position position="649"/>
    </location>
</feature>
<feature type="mutagenesis site" description="Impairs autophosphorylation and mating efficiency." evidence="22">
    <original>T</original>
    <variation>A</variation>
    <location>
        <position position="777"/>
    </location>
</feature>
<feature type="sequence conflict" description="In Ref. 2; AAA35038." evidence="32" ref="2">
    <original>N</original>
    <variation>S</variation>
    <location>
        <position position="19"/>
    </location>
</feature>
<feature type="sequence conflict" description="In Ref. 2; AAA35038." evidence="32" ref="2">
    <original>I</original>
    <variation>M</variation>
    <location>
        <position position="134"/>
    </location>
</feature>
<feature type="sequence conflict" description="In Ref. 2; AAA35038." evidence="32" ref="2">
    <original>P</original>
    <variation>S</variation>
    <location>
        <position position="271"/>
    </location>
</feature>